<gene>
    <name evidence="1" type="primary">thiC</name>
    <name type="ordered locus">Cj0453</name>
</gene>
<reference key="1">
    <citation type="journal article" date="2000" name="Nature">
        <title>The genome sequence of the food-borne pathogen Campylobacter jejuni reveals hypervariable sequences.</title>
        <authorList>
            <person name="Parkhill J."/>
            <person name="Wren B.W."/>
            <person name="Mungall K.L."/>
            <person name="Ketley J.M."/>
            <person name="Churcher C.M."/>
            <person name="Basham D."/>
            <person name="Chillingworth T."/>
            <person name="Davies R.M."/>
            <person name="Feltwell T."/>
            <person name="Holroyd S."/>
            <person name="Jagels K."/>
            <person name="Karlyshev A.V."/>
            <person name="Moule S."/>
            <person name="Pallen M.J."/>
            <person name="Penn C.W."/>
            <person name="Quail M.A."/>
            <person name="Rajandream M.A."/>
            <person name="Rutherford K.M."/>
            <person name="van Vliet A.H.M."/>
            <person name="Whitehead S."/>
            <person name="Barrell B.G."/>
        </authorList>
    </citation>
    <scope>NUCLEOTIDE SEQUENCE [LARGE SCALE GENOMIC DNA]</scope>
    <source>
        <strain>ATCC 700819 / NCTC 11168</strain>
    </source>
</reference>
<proteinExistence type="inferred from homology"/>
<accession>Q9PI55</accession>
<accession>Q0PB60</accession>
<protein>
    <recommendedName>
        <fullName evidence="1">Phosphomethylpyrimidine synthase</fullName>
        <ecNumber evidence="1">4.1.99.17</ecNumber>
    </recommendedName>
    <alternativeName>
        <fullName evidence="1">Hydroxymethylpyrimidine phosphate synthase</fullName>
        <shortName evidence="1">HMP-P synthase</shortName>
        <shortName evidence="1">HMP-phosphate synthase</shortName>
        <shortName evidence="1">HMPP synthase</shortName>
    </alternativeName>
    <alternativeName>
        <fullName evidence="1">Thiamine biosynthesis protein ThiC</fullName>
    </alternativeName>
</protein>
<organism>
    <name type="scientific">Campylobacter jejuni subsp. jejuni serotype O:2 (strain ATCC 700819 / NCTC 11168)</name>
    <dbReference type="NCBI Taxonomy" id="192222"/>
    <lineage>
        <taxon>Bacteria</taxon>
        <taxon>Pseudomonadati</taxon>
        <taxon>Campylobacterota</taxon>
        <taxon>Epsilonproteobacteria</taxon>
        <taxon>Campylobacterales</taxon>
        <taxon>Campylobacteraceae</taxon>
        <taxon>Campylobacter</taxon>
    </lineage>
</organism>
<feature type="chain" id="PRO_0000152791" description="Phosphomethylpyrimidine synthase">
    <location>
        <begin position="1"/>
        <end position="430"/>
    </location>
</feature>
<feature type="binding site" evidence="1">
    <location>
        <position position="67"/>
    </location>
    <ligand>
        <name>substrate</name>
    </ligand>
</feature>
<feature type="binding site" evidence="1">
    <location>
        <position position="96"/>
    </location>
    <ligand>
        <name>substrate</name>
    </ligand>
</feature>
<feature type="binding site" evidence="1">
    <location>
        <position position="125"/>
    </location>
    <ligand>
        <name>substrate</name>
    </ligand>
</feature>
<feature type="binding site" evidence="1">
    <location>
        <position position="161"/>
    </location>
    <ligand>
        <name>substrate</name>
    </ligand>
</feature>
<feature type="binding site" evidence="1">
    <location>
        <begin position="183"/>
        <end position="185"/>
    </location>
    <ligand>
        <name>substrate</name>
    </ligand>
</feature>
<feature type="binding site" evidence="1">
    <location>
        <begin position="224"/>
        <end position="227"/>
    </location>
    <ligand>
        <name>substrate</name>
    </ligand>
</feature>
<feature type="binding site" evidence="1">
    <location>
        <position position="263"/>
    </location>
    <ligand>
        <name>substrate</name>
    </ligand>
</feature>
<feature type="binding site" evidence="1">
    <location>
        <position position="267"/>
    </location>
    <ligand>
        <name>Zn(2+)</name>
        <dbReference type="ChEBI" id="CHEBI:29105"/>
    </ligand>
</feature>
<feature type="binding site" evidence="1">
    <location>
        <position position="290"/>
    </location>
    <ligand>
        <name>substrate</name>
    </ligand>
</feature>
<feature type="binding site" evidence="1">
    <location>
        <position position="331"/>
    </location>
    <ligand>
        <name>Zn(2+)</name>
        <dbReference type="ChEBI" id="CHEBI:29105"/>
    </ligand>
</feature>
<feature type="binding site" evidence="1">
    <location>
        <position position="406"/>
    </location>
    <ligand>
        <name>[4Fe-4S] cluster</name>
        <dbReference type="ChEBI" id="CHEBI:49883"/>
        <note>4Fe-4S-S-AdoMet</note>
    </ligand>
</feature>
<feature type="binding site" evidence="1">
    <location>
        <position position="409"/>
    </location>
    <ligand>
        <name>[4Fe-4S] cluster</name>
        <dbReference type="ChEBI" id="CHEBI:49883"/>
        <note>4Fe-4S-S-AdoMet</note>
    </ligand>
</feature>
<feature type="binding site" evidence="1">
    <location>
        <position position="413"/>
    </location>
    <ligand>
        <name>[4Fe-4S] cluster</name>
        <dbReference type="ChEBI" id="CHEBI:49883"/>
        <note>4Fe-4S-S-AdoMet</note>
    </ligand>
</feature>
<name>THIC_CAMJE</name>
<evidence type="ECO:0000255" key="1">
    <source>
        <dbReference type="HAMAP-Rule" id="MF_00089"/>
    </source>
</evidence>
<sequence>MKTQMNYAKEGIFTKEMQIVAQKENLSKDFLLENIACGKIIIPANINHKSLDPNGIGFGLRTKVNVNLGVSNDCVDYSEEMKKVELAHKFGIEAIMDLSNYGKTSRFRDELVNVSKAMIGTVPVYDAVGFLEKDLKQINAKDFLDVVYHHAKSGVDFMTIHAGINSRAAHIFKQSKRLTNIVSRGGSVLYAWMMMKDAENPFFEYYDDLLDICLKYDVTLSLGDALRPGSTHDASDGAQISELIELSLLTQRAWDVGIQVMIEGPGHMAINEIEANMQLEKRLCKGAPFYVLGPLVTDIGAGYDHISGAIGGAVAAASGADMLCYVTPAEHLRLPNLEDVREGIVATKIAAHAGDIAKLPKERARDDEMSKARQEIDWEKMFKLAIDGEKAKKMFNERRPDDLNSCSMCGKMCAMNTMNQILKGEDVSLA</sequence>
<comment type="function">
    <text evidence="1">Catalyzes the synthesis of the hydroxymethylpyrimidine phosphate (HMP-P) moiety of thiamine from aminoimidazole ribotide (AIR) in a radical S-adenosyl-L-methionine (SAM)-dependent reaction.</text>
</comment>
<comment type="catalytic activity">
    <reaction evidence="1">
        <text>5-amino-1-(5-phospho-beta-D-ribosyl)imidazole + S-adenosyl-L-methionine = 4-amino-2-methyl-5-(phosphooxymethyl)pyrimidine + CO + 5'-deoxyadenosine + formate + L-methionine + 3 H(+)</text>
        <dbReference type="Rhea" id="RHEA:24840"/>
        <dbReference type="ChEBI" id="CHEBI:15378"/>
        <dbReference type="ChEBI" id="CHEBI:15740"/>
        <dbReference type="ChEBI" id="CHEBI:17245"/>
        <dbReference type="ChEBI" id="CHEBI:17319"/>
        <dbReference type="ChEBI" id="CHEBI:57844"/>
        <dbReference type="ChEBI" id="CHEBI:58354"/>
        <dbReference type="ChEBI" id="CHEBI:59789"/>
        <dbReference type="ChEBI" id="CHEBI:137981"/>
        <dbReference type="EC" id="4.1.99.17"/>
    </reaction>
</comment>
<comment type="cofactor">
    <cofactor evidence="1">
        <name>[4Fe-4S] cluster</name>
        <dbReference type="ChEBI" id="CHEBI:49883"/>
    </cofactor>
    <text evidence="1">Binds 1 [4Fe-4S] cluster per subunit. The cluster is coordinated with 3 cysteines and an exchangeable S-adenosyl-L-methionine.</text>
</comment>
<comment type="pathway">
    <text evidence="1">Cofactor biosynthesis; thiamine diphosphate biosynthesis.</text>
</comment>
<comment type="subunit">
    <text evidence="1">Homodimer.</text>
</comment>
<comment type="similarity">
    <text evidence="1">Belongs to the ThiC family.</text>
</comment>
<dbReference type="EC" id="4.1.99.17" evidence="1"/>
<dbReference type="EMBL" id="AL111168">
    <property type="protein sequence ID" value="CAL34601.1"/>
    <property type="molecule type" value="Genomic_DNA"/>
</dbReference>
<dbReference type="PIR" id="H81389">
    <property type="entry name" value="H81389"/>
</dbReference>
<dbReference type="RefSeq" id="WP_002858621.1">
    <property type="nucleotide sequence ID" value="NZ_SZUC01000002.1"/>
</dbReference>
<dbReference type="RefSeq" id="YP_002343887.1">
    <property type="nucleotide sequence ID" value="NC_002163.1"/>
</dbReference>
<dbReference type="SMR" id="Q9PI55"/>
<dbReference type="STRING" id="192222.Cj0453"/>
<dbReference type="PaxDb" id="192222-Cj0453"/>
<dbReference type="DNASU" id="904776"/>
<dbReference type="EnsemblBacteria" id="CAL34601">
    <property type="protein sequence ID" value="CAL34601"/>
    <property type="gene ID" value="Cj0453"/>
</dbReference>
<dbReference type="GeneID" id="904776"/>
<dbReference type="KEGG" id="cje:Cj0453"/>
<dbReference type="PATRIC" id="fig|192222.6.peg.444"/>
<dbReference type="eggNOG" id="COG0422">
    <property type="taxonomic scope" value="Bacteria"/>
</dbReference>
<dbReference type="HOGENOM" id="CLU_013181_2_2_7"/>
<dbReference type="OrthoDB" id="9805897at2"/>
<dbReference type="UniPathway" id="UPA00060"/>
<dbReference type="Proteomes" id="UP000000799">
    <property type="component" value="Chromosome"/>
</dbReference>
<dbReference type="GO" id="GO:0005829">
    <property type="term" value="C:cytosol"/>
    <property type="evidence" value="ECO:0007669"/>
    <property type="project" value="TreeGrafter"/>
</dbReference>
<dbReference type="GO" id="GO:0051539">
    <property type="term" value="F:4 iron, 4 sulfur cluster binding"/>
    <property type="evidence" value="ECO:0007669"/>
    <property type="project" value="UniProtKB-KW"/>
</dbReference>
<dbReference type="GO" id="GO:0016830">
    <property type="term" value="F:carbon-carbon lyase activity"/>
    <property type="evidence" value="ECO:0007669"/>
    <property type="project" value="InterPro"/>
</dbReference>
<dbReference type="GO" id="GO:0008270">
    <property type="term" value="F:zinc ion binding"/>
    <property type="evidence" value="ECO:0007669"/>
    <property type="project" value="UniProtKB-UniRule"/>
</dbReference>
<dbReference type="GO" id="GO:0009228">
    <property type="term" value="P:thiamine biosynthetic process"/>
    <property type="evidence" value="ECO:0007669"/>
    <property type="project" value="UniProtKB-KW"/>
</dbReference>
<dbReference type="GO" id="GO:0009229">
    <property type="term" value="P:thiamine diphosphate biosynthetic process"/>
    <property type="evidence" value="ECO:0007669"/>
    <property type="project" value="UniProtKB-UniRule"/>
</dbReference>
<dbReference type="FunFam" id="3.20.20.540:FF:000001">
    <property type="entry name" value="Phosphomethylpyrimidine synthase"/>
    <property type="match status" value="1"/>
</dbReference>
<dbReference type="Gene3D" id="6.10.250.620">
    <property type="match status" value="1"/>
</dbReference>
<dbReference type="Gene3D" id="3.20.20.540">
    <property type="entry name" value="Radical SAM ThiC family, central domain"/>
    <property type="match status" value="1"/>
</dbReference>
<dbReference type="HAMAP" id="MF_00089">
    <property type="entry name" value="ThiC"/>
    <property type="match status" value="1"/>
</dbReference>
<dbReference type="InterPro" id="IPR037509">
    <property type="entry name" value="ThiC"/>
</dbReference>
<dbReference type="InterPro" id="IPR038521">
    <property type="entry name" value="ThiC/Bza_core_dom"/>
</dbReference>
<dbReference type="InterPro" id="IPR002817">
    <property type="entry name" value="ThiC/BzaA/B"/>
</dbReference>
<dbReference type="NCBIfam" id="NF009895">
    <property type="entry name" value="PRK13352.1"/>
    <property type="match status" value="1"/>
</dbReference>
<dbReference type="NCBIfam" id="TIGR00190">
    <property type="entry name" value="thiC"/>
    <property type="match status" value="1"/>
</dbReference>
<dbReference type="PANTHER" id="PTHR30557:SF1">
    <property type="entry name" value="PHOSPHOMETHYLPYRIMIDINE SYNTHASE, CHLOROPLASTIC"/>
    <property type="match status" value="1"/>
</dbReference>
<dbReference type="PANTHER" id="PTHR30557">
    <property type="entry name" value="THIAMINE BIOSYNTHESIS PROTEIN THIC"/>
    <property type="match status" value="1"/>
</dbReference>
<dbReference type="Pfam" id="PF01964">
    <property type="entry name" value="ThiC_Rad_SAM"/>
    <property type="match status" value="1"/>
</dbReference>
<dbReference type="SFLD" id="SFLDF00407">
    <property type="entry name" value="phosphomethylpyrimidine_syntha"/>
    <property type="match status" value="1"/>
</dbReference>
<dbReference type="SFLD" id="SFLDG01114">
    <property type="entry name" value="phosphomethylpyrimidine_syntha"/>
    <property type="match status" value="1"/>
</dbReference>
<dbReference type="SFLD" id="SFLDS00113">
    <property type="entry name" value="Radical_SAM_Phosphomethylpyrim"/>
    <property type="match status" value="1"/>
</dbReference>
<keyword id="KW-0004">4Fe-4S</keyword>
<keyword id="KW-0408">Iron</keyword>
<keyword id="KW-0411">Iron-sulfur</keyword>
<keyword id="KW-0456">Lyase</keyword>
<keyword id="KW-0479">Metal-binding</keyword>
<keyword id="KW-1185">Reference proteome</keyword>
<keyword id="KW-0949">S-adenosyl-L-methionine</keyword>
<keyword id="KW-0784">Thiamine biosynthesis</keyword>
<keyword id="KW-0862">Zinc</keyword>